<keyword id="KW-0067">ATP-binding</keyword>
<keyword id="KW-0436">Ligase</keyword>
<keyword id="KW-0479">Metal-binding</keyword>
<keyword id="KW-0547">Nucleotide-binding</keyword>
<keyword id="KW-0671">Queuosine biosynthesis</keyword>
<keyword id="KW-1185">Reference proteome</keyword>
<keyword id="KW-0862">Zinc</keyword>
<sequence>MSPKKKAVVLLSGGLDSATTMAIAKAENYELYALTFQYGQRHAVELEAARRIAAALGAKEHLFISIDLRIIGGSALTGPFEVPKKQEGEETSAEIPVTYVPARNTIFLSYALAWAEVLQISEIFIGVNAVDYSGYPDCRPEYITAFEAMANLAIKAAVEGTMRVKIRTPLIDLSKADIIRKGMALSVDYGLTHSCYDPLPDGKPCGQCDSCHLRRKGFREAGFDDPAFSET</sequence>
<reference key="1">
    <citation type="journal article" date="2007" name="Proc. Natl. Acad. Sci. U.S.A.">
        <title>The genome of Syntrophus aciditrophicus: life at the thermodynamic limit of microbial growth.</title>
        <authorList>
            <person name="McInerney M.J."/>
            <person name="Rohlin L."/>
            <person name="Mouttaki H."/>
            <person name="Kim U."/>
            <person name="Krupp R.S."/>
            <person name="Rios-Hernandez L."/>
            <person name="Sieber J."/>
            <person name="Struchtemeyer C.G."/>
            <person name="Bhattacharyya A."/>
            <person name="Campbell J.W."/>
            <person name="Gunsalus R.P."/>
        </authorList>
    </citation>
    <scope>NUCLEOTIDE SEQUENCE [LARGE SCALE GENOMIC DNA]</scope>
    <source>
        <strain>SB</strain>
    </source>
</reference>
<comment type="function">
    <text evidence="1">Catalyzes the ATP-dependent conversion of 7-carboxy-7-deazaguanine (CDG) to 7-cyano-7-deazaguanine (preQ(0)).</text>
</comment>
<comment type="catalytic activity">
    <reaction evidence="1">
        <text>7-carboxy-7-deazaguanine + NH4(+) + ATP = 7-cyano-7-deazaguanine + ADP + phosphate + H2O + H(+)</text>
        <dbReference type="Rhea" id="RHEA:27982"/>
        <dbReference type="ChEBI" id="CHEBI:15377"/>
        <dbReference type="ChEBI" id="CHEBI:15378"/>
        <dbReference type="ChEBI" id="CHEBI:28938"/>
        <dbReference type="ChEBI" id="CHEBI:30616"/>
        <dbReference type="ChEBI" id="CHEBI:43474"/>
        <dbReference type="ChEBI" id="CHEBI:45075"/>
        <dbReference type="ChEBI" id="CHEBI:61036"/>
        <dbReference type="ChEBI" id="CHEBI:456216"/>
        <dbReference type="EC" id="6.3.4.20"/>
    </reaction>
</comment>
<comment type="cofactor">
    <cofactor evidence="1">
        <name>Zn(2+)</name>
        <dbReference type="ChEBI" id="CHEBI:29105"/>
    </cofactor>
    <text evidence="1">Binds 1 zinc ion per subunit.</text>
</comment>
<comment type="pathway">
    <text evidence="1">Purine metabolism; 7-cyano-7-deazaguanine biosynthesis.</text>
</comment>
<comment type="similarity">
    <text evidence="1">Belongs to the QueC family.</text>
</comment>
<proteinExistence type="inferred from homology"/>
<evidence type="ECO:0000255" key="1">
    <source>
        <dbReference type="HAMAP-Rule" id="MF_01633"/>
    </source>
</evidence>
<organism>
    <name type="scientific">Syntrophus aciditrophicus (strain SB)</name>
    <dbReference type="NCBI Taxonomy" id="56780"/>
    <lineage>
        <taxon>Bacteria</taxon>
        <taxon>Pseudomonadati</taxon>
        <taxon>Thermodesulfobacteriota</taxon>
        <taxon>Syntrophia</taxon>
        <taxon>Syntrophales</taxon>
        <taxon>Syntrophaceae</taxon>
        <taxon>Syntrophus</taxon>
    </lineage>
</organism>
<gene>
    <name evidence="1" type="primary">queC</name>
    <name type="ordered locus">SYNAS_22410</name>
    <name type="ORF">SYN_01561</name>
</gene>
<protein>
    <recommendedName>
        <fullName evidence="1">7-cyano-7-deazaguanine synthase</fullName>
        <ecNumber evidence="1">6.3.4.20</ecNumber>
    </recommendedName>
    <alternativeName>
        <fullName evidence="1">7-cyano-7-carbaguanine synthase</fullName>
    </alternativeName>
    <alternativeName>
        <fullName evidence="1">PreQ(0) synthase</fullName>
    </alternativeName>
    <alternativeName>
        <fullName evidence="1">Queuosine biosynthesis protein QueC</fullName>
    </alternativeName>
</protein>
<feature type="chain" id="PRO_0000246951" description="7-cyano-7-deazaguanine synthase">
    <location>
        <begin position="1"/>
        <end position="231"/>
    </location>
</feature>
<feature type="binding site" evidence="1">
    <location>
        <begin position="11"/>
        <end position="21"/>
    </location>
    <ligand>
        <name>ATP</name>
        <dbReference type="ChEBI" id="CHEBI:30616"/>
    </ligand>
</feature>
<feature type="binding site" evidence="1">
    <location>
        <position position="195"/>
    </location>
    <ligand>
        <name>Zn(2+)</name>
        <dbReference type="ChEBI" id="CHEBI:29105"/>
    </ligand>
</feature>
<feature type="binding site" evidence="1">
    <location>
        <position position="205"/>
    </location>
    <ligand>
        <name>Zn(2+)</name>
        <dbReference type="ChEBI" id="CHEBI:29105"/>
    </ligand>
</feature>
<feature type="binding site" evidence="1">
    <location>
        <position position="208"/>
    </location>
    <ligand>
        <name>Zn(2+)</name>
        <dbReference type="ChEBI" id="CHEBI:29105"/>
    </ligand>
</feature>
<feature type="binding site" evidence="1">
    <location>
        <position position="211"/>
    </location>
    <ligand>
        <name>Zn(2+)</name>
        <dbReference type="ChEBI" id="CHEBI:29105"/>
    </ligand>
</feature>
<name>QUEC_SYNAS</name>
<dbReference type="EC" id="6.3.4.20" evidence="1"/>
<dbReference type="EMBL" id="CP000252">
    <property type="protein sequence ID" value="ABC78120.1"/>
    <property type="molecule type" value="Genomic_DNA"/>
</dbReference>
<dbReference type="RefSeq" id="WP_011418140.1">
    <property type="nucleotide sequence ID" value="NC_007759.1"/>
</dbReference>
<dbReference type="SMR" id="Q2LVL3"/>
<dbReference type="FunCoup" id="Q2LVL3">
    <property type="interactions" value="163"/>
</dbReference>
<dbReference type="STRING" id="56780.SYN_01561"/>
<dbReference type="KEGG" id="sat:SYN_01561"/>
<dbReference type="eggNOG" id="COG0603">
    <property type="taxonomic scope" value="Bacteria"/>
</dbReference>
<dbReference type="HOGENOM" id="CLU_081854_1_1_7"/>
<dbReference type="InParanoid" id="Q2LVL3"/>
<dbReference type="OrthoDB" id="9789567at2"/>
<dbReference type="UniPathway" id="UPA00391"/>
<dbReference type="Proteomes" id="UP000001933">
    <property type="component" value="Chromosome"/>
</dbReference>
<dbReference type="GO" id="GO:0005524">
    <property type="term" value="F:ATP binding"/>
    <property type="evidence" value="ECO:0007669"/>
    <property type="project" value="UniProtKB-UniRule"/>
</dbReference>
<dbReference type="GO" id="GO:0016879">
    <property type="term" value="F:ligase activity, forming carbon-nitrogen bonds"/>
    <property type="evidence" value="ECO:0007669"/>
    <property type="project" value="UniProtKB-UniRule"/>
</dbReference>
<dbReference type="GO" id="GO:0008270">
    <property type="term" value="F:zinc ion binding"/>
    <property type="evidence" value="ECO:0007669"/>
    <property type="project" value="UniProtKB-UniRule"/>
</dbReference>
<dbReference type="GO" id="GO:0008616">
    <property type="term" value="P:queuosine biosynthetic process"/>
    <property type="evidence" value="ECO:0007669"/>
    <property type="project" value="UniProtKB-UniRule"/>
</dbReference>
<dbReference type="CDD" id="cd01995">
    <property type="entry name" value="QueC-like"/>
    <property type="match status" value="1"/>
</dbReference>
<dbReference type="Gene3D" id="3.40.50.620">
    <property type="entry name" value="HUPs"/>
    <property type="match status" value="1"/>
</dbReference>
<dbReference type="HAMAP" id="MF_01633">
    <property type="entry name" value="QueC"/>
    <property type="match status" value="1"/>
</dbReference>
<dbReference type="InterPro" id="IPR018317">
    <property type="entry name" value="QueC"/>
</dbReference>
<dbReference type="InterPro" id="IPR014729">
    <property type="entry name" value="Rossmann-like_a/b/a_fold"/>
</dbReference>
<dbReference type="NCBIfam" id="TIGR00364">
    <property type="entry name" value="7-cyano-7-deazaguanine synthase QueC"/>
    <property type="match status" value="1"/>
</dbReference>
<dbReference type="PANTHER" id="PTHR42914">
    <property type="entry name" value="7-CYANO-7-DEAZAGUANINE SYNTHASE"/>
    <property type="match status" value="1"/>
</dbReference>
<dbReference type="PANTHER" id="PTHR42914:SF1">
    <property type="entry name" value="7-CYANO-7-DEAZAGUANINE SYNTHASE"/>
    <property type="match status" value="1"/>
</dbReference>
<dbReference type="Pfam" id="PF06508">
    <property type="entry name" value="QueC"/>
    <property type="match status" value="1"/>
</dbReference>
<dbReference type="PIRSF" id="PIRSF006293">
    <property type="entry name" value="ExsB"/>
    <property type="match status" value="1"/>
</dbReference>
<dbReference type="SUPFAM" id="SSF52402">
    <property type="entry name" value="Adenine nucleotide alpha hydrolases-like"/>
    <property type="match status" value="1"/>
</dbReference>
<accession>Q2LVL3</accession>